<comment type="function">
    <text evidence="1">May be a general defense protein.</text>
</comment>
<comment type="subcellular location">
    <subcellularLocation>
        <location evidence="2">Membrane</location>
        <topology evidence="2">Multi-pass membrane protein</topology>
    </subcellularLocation>
</comment>
<comment type="similarity">
    <text evidence="7">Belongs to the ABC transporter superfamily. ABCG family. PDR (TC 3.A.1.205) subfamily.</text>
</comment>
<comment type="sequence caution" evidence="7">
    <conflict type="erroneous gene model prediction">
        <sequence resource="EMBL-CDS" id="BAF06025"/>
    </conflict>
</comment>
<proteinExistence type="inferred from homology"/>
<sequence>MADPQHVQEEAAGAEAVHAHAARHDGAVVMEILSRSLQSMPASPDVSAYFSGASSRRPSAADEVDDEEALRWAALERLPSFDRLRTGLMRADADSSGVGVGAVGRGRRWYAHREVDVRTLELAQRQAFVERVFHVAEEDNERFLKKLRARIDRAGIQMPTVEVRFRNVNVQAECHVGTRALPTLANVSRDVGESLLGLVGLNFAKRKALHILKDVSGIVRPSRMTLLLGPPSSGKTTLLLALAGKLDPTLETSGEVTYNGYGLDEFVPQKTAAYISQHDVHAGEMTVKETLDFSAKCQGVGQRYELLKELAKKERQLGIYPDPEVDLFMKATSVEGSTLQTDYILRILGLDMCADVIVGDELRRGISGGQKKRLTTAEMLVGPTKVLFMDEISTGLDSSTTFQIIRCIQQIVHMGEATVLVSLLQPAPEIFELFDDVMLLSEGQIVYQGPREHVLEFFERCGFRCPERKGVADFLQEVTSKKDQEQYWIQSEKPYRYVSVPEFVAKFKKFHMGKSLKKQLSVPFNKGKIHKSALVFSKQSVSTLELLKTSCSKEWLLMKRNSFVYIFKTVQGILVALIASTVFLRTQLNTRDEDDGQIYIGALIFVMITNMFSGFADLSLTLARLPVFYKHRDFLFYRPWTFALPNVLVRIPSSLFESIIWVAITYYTMGFAPEASRFFKHLLVVFMLQQMAAGLFRVTAGLCRTVVVTNTAGSLAVLIMFVLGGFILPKDAIPKWWVWAYWCSPLTYAYIAFSSNEMHSPRWMDKFVPDGKRLGVAVLENSGVFTNKEWYWIATGALLGFTILFNVLFSLSLMYLNPVGKPQSILPEETDSQENIQEGKNKAHIKQIITVETPEPVSPNSIITLDKVIQQLRGYSANTSDRSHSYINAAGRTAPGRGMVLPFEPLYMSFNEINYYVDMPLEMKSQGVTADKLQLLSGISGAFRPGVLTALMGVSGAGKTTLMDVLSGRKTGGYIEGEIYISGYPKNQATFARISGYCEQNDIHSPQITVRESLLFSAFLRLPKEVNDQEKKIFVDEVMELVELTGLKDAIVGLPGVNGLSTEQRKRLTIAVELVANPSIIFMDEPTSGLDARAAAIVMRTVRNTVNTGRTVVCTIHQPSIDIFEAFDELLLLKRGGQVIYSGPLGTNSHKVVEYFEAIPGVPKIEENRNPATWMLDVSSAASEVRLEIDFAEYYRSSTMHQRTKALVKELSNPPPGSDDLYFPSQYSQSTFNQFKLCLWKQWWTYWRSPDYNLVRIFFALFTALMLGTIFWRVGHKMESSKDLLVIIGSMYAAVLFVGFENSVTVQPVVAVERTVFYRERAAGMYSAIPYALAQVVVEIPYVFVETVIYTLIVYPMMSFQWTPAKFFWFFYVSFFTFLYFTYYGMMNVSVSPNLQVASILGAAFYTLFNLFSGFFIPRPKIPKWWVWYYWLCPVAWTVYGLIVSQYGDVEDFITVPGQSDQQVRPFIKDYFGYDPDFMGVVAAVLAGFTVFFAFTYAYSIRTLNFQQR</sequence>
<protein>
    <recommendedName>
        <fullName evidence="6">ABC transporter G family member 38</fullName>
        <shortName evidence="6">OsABCG38</shortName>
    </recommendedName>
    <alternativeName>
        <fullName evidence="4 5">Pleiotropic drug resistance protein 15</fullName>
        <shortName evidence="5">OsPDR15</shortName>
    </alternativeName>
</protein>
<accession>Q7FMW4</accession>
<accession>Q0JJQ3</accession>
<keyword id="KW-0067">ATP-binding</keyword>
<keyword id="KW-0472">Membrane</keyword>
<keyword id="KW-0547">Nucleotide-binding</keyword>
<keyword id="KW-1185">Reference proteome</keyword>
<keyword id="KW-0677">Repeat</keyword>
<keyword id="KW-0812">Transmembrane</keyword>
<keyword id="KW-1133">Transmembrane helix</keyword>
<keyword id="KW-0813">Transport</keyword>
<feature type="chain" id="PRO_0000234652" description="ABC transporter G family member 38">
    <location>
        <begin position="1"/>
        <end position="1509"/>
    </location>
</feature>
<feature type="transmembrane region" description="Helical" evidence="2">
    <location>
        <begin position="563"/>
        <end position="583"/>
    </location>
</feature>
<feature type="transmembrane region" description="Helical" evidence="2">
    <location>
        <begin position="598"/>
        <end position="618"/>
    </location>
</feature>
<feature type="transmembrane region" description="Helical" evidence="2">
    <location>
        <begin position="651"/>
        <end position="671"/>
    </location>
</feature>
<feature type="transmembrane region" description="Helical" evidence="2">
    <location>
        <begin position="682"/>
        <end position="702"/>
    </location>
</feature>
<feature type="transmembrane region" description="Helical" evidence="2">
    <location>
        <begin position="707"/>
        <end position="727"/>
    </location>
</feature>
<feature type="transmembrane region" description="Helical" evidence="2">
    <location>
        <begin position="733"/>
        <end position="753"/>
    </location>
</feature>
<feature type="transmembrane region" description="Helical" evidence="2">
    <location>
        <begin position="791"/>
        <end position="811"/>
    </location>
</feature>
<feature type="transmembrane region" description="Helical" evidence="2">
    <location>
        <begin position="1252"/>
        <end position="1272"/>
    </location>
</feature>
<feature type="transmembrane region" description="Helical" evidence="2">
    <location>
        <begin position="1284"/>
        <end position="1304"/>
    </location>
</feature>
<feature type="transmembrane region" description="Helical" evidence="2">
    <location>
        <begin position="1336"/>
        <end position="1356"/>
    </location>
</feature>
<feature type="transmembrane region" description="Helical" evidence="2">
    <location>
        <begin position="1367"/>
        <end position="1387"/>
    </location>
</feature>
<feature type="transmembrane region" description="Helical" evidence="2">
    <location>
        <begin position="1397"/>
        <end position="1417"/>
    </location>
</feature>
<feature type="transmembrane region" description="Helical" evidence="2">
    <location>
        <begin position="1425"/>
        <end position="1445"/>
    </location>
</feature>
<feature type="transmembrane region" description="Helical" evidence="2">
    <location>
        <begin position="1478"/>
        <end position="1498"/>
    </location>
</feature>
<feature type="domain" description="ABC transporter 1" evidence="3">
    <location>
        <begin position="196"/>
        <end position="467"/>
    </location>
</feature>
<feature type="domain" description="ABC transmembrane type-2 1">
    <location>
        <begin position="545"/>
        <end position="758"/>
    </location>
</feature>
<feature type="domain" description="ABC transporter 2" evidence="3">
    <location>
        <begin position="908"/>
        <end position="1160"/>
    </location>
</feature>
<feature type="domain" description="ABC transmembrane type-2 2">
    <location>
        <begin position="1233"/>
        <end position="1447"/>
    </location>
</feature>
<feature type="binding site" evidence="3">
    <location>
        <begin position="229"/>
        <end position="236"/>
    </location>
    <ligand>
        <name>ATP</name>
        <dbReference type="ChEBI" id="CHEBI:30616"/>
        <label>1</label>
    </ligand>
</feature>
<feature type="binding site" evidence="3">
    <location>
        <begin position="953"/>
        <end position="960"/>
    </location>
    <ligand>
        <name>ATP</name>
        <dbReference type="ChEBI" id="CHEBI:30616"/>
        <label>2</label>
    </ligand>
</feature>
<name>AB38G_ORYSJ</name>
<reference key="1">
    <citation type="journal article" date="2003" name="Plant Physiol.">
        <title>The ATP-binding cassette transporters: structure, function, and gene family comparison between rice and Arabidopsis.</title>
        <authorList>
            <person name="Jasinski M."/>
            <person name="Ducos E."/>
            <person name="Martinoia E."/>
            <person name="Boutry M."/>
        </authorList>
    </citation>
    <scope>NUCLEOTIDE SEQUENCE [GENOMIC DNA]</scope>
    <source>
        <strain>cv. Nipponbare</strain>
    </source>
</reference>
<reference key="2">
    <citation type="journal article" date="2002" name="Nature">
        <title>The genome sequence and structure of rice chromosome 1.</title>
        <authorList>
            <person name="Sasaki T."/>
            <person name="Matsumoto T."/>
            <person name="Yamamoto K."/>
            <person name="Sakata K."/>
            <person name="Baba T."/>
            <person name="Katayose Y."/>
            <person name="Wu J."/>
            <person name="Niimura Y."/>
            <person name="Cheng Z."/>
            <person name="Nagamura Y."/>
            <person name="Antonio B.A."/>
            <person name="Kanamori H."/>
            <person name="Hosokawa S."/>
            <person name="Masukawa M."/>
            <person name="Arikawa K."/>
            <person name="Chiden Y."/>
            <person name="Hayashi M."/>
            <person name="Okamoto M."/>
            <person name="Ando T."/>
            <person name="Aoki H."/>
            <person name="Arita K."/>
            <person name="Hamada M."/>
            <person name="Harada C."/>
            <person name="Hijishita S."/>
            <person name="Honda M."/>
            <person name="Ichikawa Y."/>
            <person name="Idonuma A."/>
            <person name="Iijima M."/>
            <person name="Ikeda M."/>
            <person name="Ikeno M."/>
            <person name="Ito S."/>
            <person name="Ito T."/>
            <person name="Ito Y."/>
            <person name="Ito Y."/>
            <person name="Iwabuchi A."/>
            <person name="Kamiya K."/>
            <person name="Karasawa W."/>
            <person name="Katagiri S."/>
            <person name="Kikuta A."/>
            <person name="Kobayashi N."/>
            <person name="Kono I."/>
            <person name="Machita K."/>
            <person name="Maehara T."/>
            <person name="Mizuno H."/>
            <person name="Mizubayashi T."/>
            <person name="Mukai Y."/>
            <person name="Nagasaki H."/>
            <person name="Nakashima M."/>
            <person name="Nakama Y."/>
            <person name="Nakamichi Y."/>
            <person name="Nakamura M."/>
            <person name="Namiki N."/>
            <person name="Negishi M."/>
            <person name="Ohta I."/>
            <person name="Ono N."/>
            <person name="Saji S."/>
            <person name="Sakai K."/>
            <person name="Shibata M."/>
            <person name="Shimokawa T."/>
            <person name="Shomura A."/>
            <person name="Song J."/>
            <person name="Takazaki Y."/>
            <person name="Terasawa K."/>
            <person name="Tsuji K."/>
            <person name="Waki K."/>
            <person name="Yamagata H."/>
            <person name="Yamane H."/>
            <person name="Yoshiki S."/>
            <person name="Yoshihara R."/>
            <person name="Yukawa K."/>
            <person name="Zhong H."/>
            <person name="Iwama H."/>
            <person name="Endo T."/>
            <person name="Ito H."/>
            <person name="Hahn J.H."/>
            <person name="Kim H.-I."/>
            <person name="Eun M.-Y."/>
            <person name="Yano M."/>
            <person name="Jiang J."/>
            <person name="Gojobori T."/>
        </authorList>
    </citation>
    <scope>NUCLEOTIDE SEQUENCE [LARGE SCALE GENOMIC DNA]</scope>
    <source>
        <strain>cv. Nipponbare</strain>
    </source>
</reference>
<reference key="3">
    <citation type="journal article" date="2005" name="Nature">
        <title>The map-based sequence of the rice genome.</title>
        <authorList>
            <consortium name="International rice genome sequencing project (IRGSP)"/>
        </authorList>
    </citation>
    <scope>NUCLEOTIDE SEQUENCE [LARGE SCALE GENOMIC DNA]</scope>
    <source>
        <strain>cv. Nipponbare</strain>
    </source>
</reference>
<reference key="4">
    <citation type="journal article" date="2008" name="Nucleic Acids Res.">
        <title>The rice annotation project database (RAP-DB): 2008 update.</title>
        <authorList>
            <consortium name="The rice annotation project (RAP)"/>
        </authorList>
    </citation>
    <scope>GENOME REANNOTATION</scope>
    <source>
        <strain>cv. Nipponbare</strain>
    </source>
</reference>
<reference key="5">
    <citation type="journal article" date="2013" name="Rice">
        <title>Improvement of the Oryza sativa Nipponbare reference genome using next generation sequence and optical map data.</title>
        <authorList>
            <person name="Kawahara Y."/>
            <person name="de la Bastide M."/>
            <person name="Hamilton J.P."/>
            <person name="Kanamori H."/>
            <person name="McCombie W.R."/>
            <person name="Ouyang S."/>
            <person name="Schwartz D.C."/>
            <person name="Tanaka T."/>
            <person name="Wu J."/>
            <person name="Zhou S."/>
            <person name="Childs K.L."/>
            <person name="Davidson R.M."/>
            <person name="Lin H."/>
            <person name="Quesada-Ocampo L."/>
            <person name="Vaillancourt B."/>
            <person name="Sakai H."/>
            <person name="Lee S.S."/>
            <person name="Kim J."/>
            <person name="Numa H."/>
            <person name="Itoh T."/>
            <person name="Buell C.R."/>
            <person name="Matsumoto T."/>
        </authorList>
    </citation>
    <scope>GENOME REANNOTATION</scope>
    <source>
        <strain>cv. Nipponbare</strain>
    </source>
</reference>
<reference key="6">
    <citation type="journal article" date="2006" name="FEBS Lett.">
        <title>Organization and function of the plant pleiotropic drug resistance ABC transporter family.</title>
        <authorList>
            <person name="Crouzet J."/>
            <person name="Trombik T."/>
            <person name="Fraysse A.S."/>
            <person name="Boutry M."/>
        </authorList>
    </citation>
    <scope>GENE FAMILY</scope>
    <scope>NOMENCLATURE</scope>
</reference>
<reference key="7">
    <citation type="journal article" date="2008" name="Trends Plant Sci.">
        <title>Plant ABC proteins - a unified nomenclature and updated inventory.</title>
        <authorList>
            <person name="Verrier P.J."/>
            <person name="Bird D."/>
            <person name="Burla B."/>
            <person name="Dassa E."/>
            <person name="Forestier C."/>
            <person name="Geisler M."/>
            <person name="Klein M."/>
            <person name="Kolukisaoglu H.U."/>
            <person name="Lee Y."/>
            <person name="Martinoia E."/>
            <person name="Murphy A."/>
            <person name="Rea P.A."/>
            <person name="Samuels L."/>
            <person name="Schulz B."/>
            <person name="Spalding E.J."/>
            <person name="Yazaki K."/>
            <person name="Theodoulou F.L."/>
        </authorList>
    </citation>
    <scope>GENE FAMILY</scope>
    <scope>NOMENCLATURE</scope>
</reference>
<dbReference type="EMBL" id="AJ535041">
    <property type="protein sequence ID" value="CAD59563.1"/>
    <property type="molecule type" value="Genomic_DNA"/>
</dbReference>
<dbReference type="EMBL" id="AP003229">
    <property type="status" value="NOT_ANNOTATED_CDS"/>
    <property type="molecule type" value="Genomic_DNA"/>
</dbReference>
<dbReference type="EMBL" id="AP008207">
    <property type="protein sequence ID" value="BAF06025.1"/>
    <property type="status" value="ALT_SEQ"/>
    <property type="molecule type" value="Genomic_DNA"/>
</dbReference>
<dbReference type="EMBL" id="AP014957">
    <property type="status" value="NOT_ANNOTATED_CDS"/>
    <property type="molecule type" value="Genomic_DNA"/>
</dbReference>
<dbReference type="RefSeq" id="XP_015631031.1">
    <property type="nucleotide sequence ID" value="XM_015775545.1"/>
</dbReference>
<dbReference type="SMR" id="Q7FMW4"/>
<dbReference type="FunCoup" id="Q7FMW4">
    <property type="interactions" value="108"/>
</dbReference>
<dbReference type="STRING" id="39947.Q7FMW4"/>
<dbReference type="PaxDb" id="39947-Q7FMW4"/>
<dbReference type="GeneID" id="4324722"/>
<dbReference type="KEGG" id="dosa:Os01g0724500"/>
<dbReference type="KEGG" id="osa:4324722"/>
<dbReference type="InParanoid" id="Q7FMW4"/>
<dbReference type="OrthoDB" id="66620at2759"/>
<dbReference type="Proteomes" id="UP000000763">
    <property type="component" value="Chromosome 1"/>
</dbReference>
<dbReference type="Proteomes" id="UP000059680">
    <property type="component" value="Chromosome 1"/>
</dbReference>
<dbReference type="GO" id="GO:0005886">
    <property type="term" value="C:plasma membrane"/>
    <property type="evidence" value="ECO:0007669"/>
    <property type="project" value="UniProtKB-ARBA"/>
</dbReference>
<dbReference type="GO" id="GO:0140359">
    <property type="term" value="F:ABC-type transporter activity"/>
    <property type="evidence" value="ECO:0007669"/>
    <property type="project" value="InterPro"/>
</dbReference>
<dbReference type="GO" id="GO:0005524">
    <property type="term" value="F:ATP binding"/>
    <property type="evidence" value="ECO:0007669"/>
    <property type="project" value="UniProtKB-KW"/>
</dbReference>
<dbReference type="GO" id="GO:0016887">
    <property type="term" value="F:ATP hydrolysis activity"/>
    <property type="evidence" value="ECO:0007669"/>
    <property type="project" value="InterPro"/>
</dbReference>
<dbReference type="CDD" id="cd03233">
    <property type="entry name" value="ABCG_PDR_domain1"/>
    <property type="match status" value="1"/>
</dbReference>
<dbReference type="CDD" id="cd03232">
    <property type="entry name" value="ABCG_PDR_domain2"/>
    <property type="match status" value="1"/>
</dbReference>
<dbReference type="FunFam" id="3.40.50.300:FF:000179">
    <property type="entry name" value="ABC transporter G family member 34"/>
    <property type="match status" value="1"/>
</dbReference>
<dbReference type="FunFam" id="3.40.50.300:FF:000059">
    <property type="entry name" value="ABC transporter G family member 40"/>
    <property type="match status" value="1"/>
</dbReference>
<dbReference type="Gene3D" id="3.40.50.300">
    <property type="entry name" value="P-loop containing nucleotide triphosphate hydrolases"/>
    <property type="match status" value="2"/>
</dbReference>
<dbReference type="InterPro" id="IPR003593">
    <property type="entry name" value="AAA+_ATPase"/>
</dbReference>
<dbReference type="InterPro" id="IPR013525">
    <property type="entry name" value="ABC2_TM"/>
</dbReference>
<dbReference type="InterPro" id="IPR029481">
    <property type="entry name" value="ABC_trans_N"/>
</dbReference>
<dbReference type="InterPro" id="IPR003439">
    <property type="entry name" value="ABC_transporter-like_ATP-bd"/>
</dbReference>
<dbReference type="InterPro" id="IPR043926">
    <property type="entry name" value="ABCG_dom"/>
</dbReference>
<dbReference type="InterPro" id="IPR034001">
    <property type="entry name" value="ABCG_PDR_1"/>
</dbReference>
<dbReference type="InterPro" id="IPR034003">
    <property type="entry name" value="ABCG_PDR_2"/>
</dbReference>
<dbReference type="InterPro" id="IPR027417">
    <property type="entry name" value="P-loop_NTPase"/>
</dbReference>
<dbReference type="InterPro" id="IPR013581">
    <property type="entry name" value="PDR_assoc"/>
</dbReference>
<dbReference type="PANTHER" id="PTHR19241">
    <property type="entry name" value="ATP-BINDING CASSETTE TRANSPORTER"/>
    <property type="match status" value="1"/>
</dbReference>
<dbReference type="Pfam" id="PF01061">
    <property type="entry name" value="ABC2_membrane"/>
    <property type="match status" value="2"/>
</dbReference>
<dbReference type="Pfam" id="PF19055">
    <property type="entry name" value="ABC2_membrane_7"/>
    <property type="match status" value="2"/>
</dbReference>
<dbReference type="Pfam" id="PF00005">
    <property type="entry name" value="ABC_tran"/>
    <property type="match status" value="2"/>
</dbReference>
<dbReference type="Pfam" id="PF14510">
    <property type="entry name" value="ABC_trans_N"/>
    <property type="match status" value="1"/>
</dbReference>
<dbReference type="Pfam" id="PF08370">
    <property type="entry name" value="PDR_assoc"/>
    <property type="match status" value="1"/>
</dbReference>
<dbReference type="SMART" id="SM00382">
    <property type="entry name" value="AAA"/>
    <property type="match status" value="2"/>
</dbReference>
<dbReference type="SUPFAM" id="SSF52540">
    <property type="entry name" value="P-loop containing nucleoside triphosphate hydrolases"/>
    <property type="match status" value="2"/>
</dbReference>
<dbReference type="PROSITE" id="PS50893">
    <property type="entry name" value="ABC_TRANSPORTER_2"/>
    <property type="match status" value="2"/>
</dbReference>
<gene>
    <name evidence="6" type="primary">ABCG38</name>
    <name evidence="4 5" type="synonym">PDR15</name>
    <name evidence="9" type="ordered locus">Os01g0724500</name>
    <name type="ordered locus">LOC_Os01g52560</name>
    <name evidence="8" type="ORF">P0022F10.18</name>
</gene>
<organism>
    <name type="scientific">Oryza sativa subsp. japonica</name>
    <name type="common">Rice</name>
    <dbReference type="NCBI Taxonomy" id="39947"/>
    <lineage>
        <taxon>Eukaryota</taxon>
        <taxon>Viridiplantae</taxon>
        <taxon>Streptophyta</taxon>
        <taxon>Embryophyta</taxon>
        <taxon>Tracheophyta</taxon>
        <taxon>Spermatophyta</taxon>
        <taxon>Magnoliopsida</taxon>
        <taxon>Liliopsida</taxon>
        <taxon>Poales</taxon>
        <taxon>Poaceae</taxon>
        <taxon>BOP clade</taxon>
        <taxon>Oryzoideae</taxon>
        <taxon>Oryzeae</taxon>
        <taxon>Oryzinae</taxon>
        <taxon>Oryza</taxon>
        <taxon>Oryza sativa</taxon>
    </lineage>
</organism>
<evidence type="ECO:0000250" key="1"/>
<evidence type="ECO:0000255" key="2"/>
<evidence type="ECO:0000255" key="3">
    <source>
        <dbReference type="PROSITE-ProRule" id="PRU00434"/>
    </source>
</evidence>
<evidence type="ECO:0000303" key="4">
    <source>
    </source>
</evidence>
<evidence type="ECO:0000303" key="5">
    <source>
    </source>
</evidence>
<evidence type="ECO:0000303" key="6">
    <source>
    </source>
</evidence>
<evidence type="ECO:0000305" key="7"/>
<evidence type="ECO:0000312" key="8">
    <source>
        <dbReference type="EMBL" id="AP003229"/>
    </source>
</evidence>
<evidence type="ECO:0000312" key="9">
    <source>
        <dbReference type="EMBL" id="BAF06025.1"/>
    </source>
</evidence>